<protein>
    <recommendedName>
        <fullName>Acylphosphatase</fullName>
        <ecNumber>3.6.1.7</ecNumber>
    </recommendedName>
    <alternativeName>
        <fullName>Acylphosphate phosphohydrolase</fullName>
    </alternativeName>
</protein>
<accession>Q2S0V7</accession>
<dbReference type="EC" id="3.6.1.7"/>
<dbReference type="EMBL" id="CP000159">
    <property type="protein sequence ID" value="ABC44877.1"/>
    <property type="molecule type" value="Genomic_DNA"/>
</dbReference>
<dbReference type="RefSeq" id="WP_011404796.1">
    <property type="nucleotide sequence ID" value="NC_007677.1"/>
</dbReference>
<dbReference type="RefSeq" id="YP_446174.1">
    <property type="nucleotide sequence ID" value="NC_007677.1"/>
</dbReference>
<dbReference type="SMR" id="Q2S0V7"/>
<dbReference type="STRING" id="309807.SRU_2068"/>
<dbReference type="EnsemblBacteria" id="ABC44877">
    <property type="protein sequence ID" value="ABC44877"/>
    <property type="gene ID" value="SRU_2068"/>
</dbReference>
<dbReference type="KEGG" id="sru:SRU_2068"/>
<dbReference type="PATRIC" id="fig|309807.25.peg.2152"/>
<dbReference type="eggNOG" id="COG1254">
    <property type="taxonomic scope" value="Bacteria"/>
</dbReference>
<dbReference type="HOGENOM" id="CLU_141932_3_2_10"/>
<dbReference type="OrthoDB" id="9808093at2"/>
<dbReference type="Proteomes" id="UP000008674">
    <property type="component" value="Chromosome"/>
</dbReference>
<dbReference type="GO" id="GO:0003998">
    <property type="term" value="F:acylphosphatase activity"/>
    <property type="evidence" value="ECO:0007669"/>
    <property type="project" value="UniProtKB-EC"/>
</dbReference>
<dbReference type="Gene3D" id="3.30.70.100">
    <property type="match status" value="1"/>
</dbReference>
<dbReference type="InterPro" id="IPR020456">
    <property type="entry name" value="Acylphosphatase"/>
</dbReference>
<dbReference type="InterPro" id="IPR001792">
    <property type="entry name" value="Acylphosphatase-like_dom"/>
</dbReference>
<dbReference type="InterPro" id="IPR036046">
    <property type="entry name" value="Acylphosphatase-like_dom_sf"/>
</dbReference>
<dbReference type="InterPro" id="IPR017968">
    <property type="entry name" value="Acylphosphatase_CS"/>
</dbReference>
<dbReference type="PANTHER" id="PTHR47268">
    <property type="entry name" value="ACYLPHOSPHATASE"/>
    <property type="match status" value="1"/>
</dbReference>
<dbReference type="PANTHER" id="PTHR47268:SF4">
    <property type="entry name" value="ACYLPHOSPHATASE"/>
    <property type="match status" value="1"/>
</dbReference>
<dbReference type="Pfam" id="PF00708">
    <property type="entry name" value="Acylphosphatase"/>
    <property type="match status" value="1"/>
</dbReference>
<dbReference type="PRINTS" id="PR00112">
    <property type="entry name" value="ACYLPHPHTASE"/>
</dbReference>
<dbReference type="SUPFAM" id="SSF54975">
    <property type="entry name" value="Acylphosphatase/BLUF domain-like"/>
    <property type="match status" value="1"/>
</dbReference>
<dbReference type="PROSITE" id="PS00150">
    <property type="entry name" value="ACYLPHOSPHATASE_1"/>
    <property type="match status" value="1"/>
</dbReference>
<dbReference type="PROSITE" id="PS00151">
    <property type="entry name" value="ACYLPHOSPHATASE_2"/>
    <property type="match status" value="1"/>
</dbReference>
<dbReference type="PROSITE" id="PS51160">
    <property type="entry name" value="ACYLPHOSPHATASE_3"/>
    <property type="match status" value="1"/>
</dbReference>
<sequence>METGTEKRVSARITGRVQGVGFRNFTRRRARRLDVTGWVRNESDGSVRLEAEGPTDALESLIEAVHEGPRTARVETVDVDWSDAADAFEGFRVRR</sequence>
<reference key="1">
    <citation type="journal article" date="2005" name="Proc. Natl. Acad. Sci. U.S.A.">
        <title>The genome of Salinibacter ruber: convergence and gene exchange among hyperhalophilic bacteria and archaea.</title>
        <authorList>
            <person name="Mongodin E.F."/>
            <person name="Nelson K.E."/>
            <person name="Daugherty S."/>
            <person name="DeBoy R.T."/>
            <person name="Wister J."/>
            <person name="Khouri H."/>
            <person name="Weidman J."/>
            <person name="Walsh D.A."/>
            <person name="Papke R.T."/>
            <person name="Sanchez Perez G."/>
            <person name="Sharma A.K."/>
            <person name="Nesbo C.L."/>
            <person name="MacLeod D."/>
            <person name="Bapteste E."/>
            <person name="Doolittle W.F."/>
            <person name="Charlebois R.L."/>
            <person name="Legault B."/>
            <person name="Rodriguez-Valera F."/>
        </authorList>
    </citation>
    <scope>NUCLEOTIDE SEQUENCE [LARGE SCALE GENOMIC DNA]</scope>
    <source>
        <strain>DSM 13855 / CECT 5946 / M31</strain>
    </source>
</reference>
<evidence type="ECO:0000255" key="1">
    <source>
        <dbReference type="PROSITE-ProRule" id="PRU00520"/>
    </source>
</evidence>
<evidence type="ECO:0000305" key="2"/>
<proteinExistence type="inferred from homology"/>
<gene>
    <name type="primary">acyP</name>
    <name type="ordered locus">SRU_2068</name>
</gene>
<comment type="catalytic activity">
    <reaction>
        <text>an acyl phosphate + H2O = a carboxylate + phosphate + H(+)</text>
        <dbReference type="Rhea" id="RHEA:14965"/>
        <dbReference type="ChEBI" id="CHEBI:15377"/>
        <dbReference type="ChEBI" id="CHEBI:15378"/>
        <dbReference type="ChEBI" id="CHEBI:29067"/>
        <dbReference type="ChEBI" id="CHEBI:43474"/>
        <dbReference type="ChEBI" id="CHEBI:59918"/>
        <dbReference type="EC" id="3.6.1.7"/>
    </reaction>
</comment>
<comment type="similarity">
    <text evidence="2">Belongs to the acylphosphatase family.</text>
</comment>
<organism>
    <name type="scientific">Salinibacter ruber (strain DSM 13855 / M31)</name>
    <dbReference type="NCBI Taxonomy" id="309807"/>
    <lineage>
        <taxon>Bacteria</taxon>
        <taxon>Pseudomonadati</taxon>
        <taxon>Rhodothermota</taxon>
        <taxon>Rhodothermia</taxon>
        <taxon>Rhodothermales</taxon>
        <taxon>Salinibacteraceae</taxon>
        <taxon>Salinibacter</taxon>
    </lineage>
</organism>
<keyword id="KW-0378">Hydrolase</keyword>
<keyword id="KW-1185">Reference proteome</keyword>
<feature type="chain" id="PRO_0000326794" description="Acylphosphatase">
    <location>
        <begin position="1"/>
        <end position="95"/>
    </location>
</feature>
<feature type="domain" description="Acylphosphatase-like" evidence="1">
    <location>
        <begin position="8"/>
        <end position="95"/>
    </location>
</feature>
<feature type="active site" evidence="1">
    <location>
        <position position="23"/>
    </location>
</feature>
<feature type="active site" evidence="1">
    <location>
        <position position="41"/>
    </location>
</feature>
<name>ACYP_SALRD</name>